<evidence type="ECO:0000255" key="1">
    <source>
        <dbReference type="HAMAP-Rule" id="MF_01023"/>
    </source>
</evidence>
<evidence type="ECO:0000256" key="2">
    <source>
        <dbReference type="SAM" id="MobiDB-lite"/>
    </source>
</evidence>
<dbReference type="EC" id="2.6.1.9" evidence="1"/>
<dbReference type="EMBL" id="CR378666">
    <property type="protein sequence ID" value="CAG19501.1"/>
    <property type="molecule type" value="Genomic_DNA"/>
</dbReference>
<dbReference type="RefSeq" id="WP_011217834.1">
    <property type="nucleotide sequence ID" value="NC_006370.1"/>
</dbReference>
<dbReference type="SMR" id="Q6LT75"/>
<dbReference type="STRING" id="298386.PBPRA1090"/>
<dbReference type="KEGG" id="ppr:PBPRA1090"/>
<dbReference type="eggNOG" id="COG0079">
    <property type="taxonomic scope" value="Bacteria"/>
</dbReference>
<dbReference type="HOGENOM" id="CLU_017584_3_1_6"/>
<dbReference type="UniPathway" id="UPA00031">
    <property type="reaction ID" value="UER00012"/>
</dbReference>
<dbReference type="Proteomes" id="UP000000593">
    <property type="component" value="Chromosome 1"/>
</dbReference>
<dbReference type="GO" id="GO:0004400">
    <property type="term" value="F:histidinol-phosphate transaminase activity"/>
    <property type="evidence" value="ECO:0007669"/>
    <property type="project" value="UniProtKB-UniRule"/>
</dbReference>
<dbReference type="GO" id="GO:0030170">
    <property type="term" value="F:pyridoxal phosphate binding"/>
    <property type="evidence" value="ECO:0007669"/>
    <property type="project" value="InterPro"/>
</dbReference>
<dbReference type="GO" id="GO:0000105">
    <property type="term" value="P:L-histidine biosynthetic process"/>
    <property type="evidence" value="ECO:0007669"/>
    <property type="project" value="UniProtKB-UniRule"/>
</dbReference>
<dbReference type="CDD" id="cd00609">
    <property type="entry name" value="AAT_like"/>
    <property type="match status" value="1"/>
</dbReference>
<dbReference type="Gene3D" id="3.90.1150.10">
    <property type="entry name" value="Aspartate Aminotransferase, domain 1"/>
    <property type="match status" value="1"/>
</dbReference>
<dbReference type="Gene3D" id="3.40.640.10">
    <property type="entry name" value="Type I PLP-dependent aspartate aminotransferase-like (Major domain)"/>
    <property type="match status" value="1"/>
</dbReference>
<dbReference type="HAMAP" id="MF_01023">
    <property type="entry name" value="HisC_aminotrans_2"/>
    <property type="match status" value="1"/>
</dbReference>
<dbReference type="InterPro" id="IPR001917">
    <property type="entry name" value="Aminotrans_II_pyridoxalP_BS"/>
</dbReference>
<dbReference type="InterPro" id="IPR004839">
    <property type="entry name" value="Aminotransferase_I/II_large"/>
</dbReference>
<dbReference type="InterPro" id="IPR005861">
    <property type="entry name" value="HisP_aminotrans"/>
</dbReference>
<dbReference type="InterPro" id="IPR015424">
    <property type="entry name" value="PyrdxlP-dep_Trfase"/>
</dbReference>
<dbReference type="InterPro" id="IPR015421">
    <property type="entry name" value="PyrdxlP-dep_Trfase_major"/>
</dbReference>
<dbReference type="InterPro" id="IPR015422">
    <property type="entry name" value="PyrdxlP-dep_Trfase_small"/>
</dbReference>
<dbReference type="NCBIfam" id="TIGR01141">
    <property type="entry name" value="hisC"/>
    <property type="match status" value="1"/>
</dbReference>
<dbReference type="PANTHER" id="PTHR42885:SF2">
    <property type="entry name" value="HISTIDINOL-PHOSPHATE AMINOTRANSFERASE"/>
    <property type="match status" value="1"/>
</dbReference>
<dbReference type="PANTHER" id="PTHR42885">
    <property type="entry name" value="HISTIDINOL-PHOSPHATE AMINOTRANSFERASE-RELATED"/>
    <property type="match status" value="1"/>
</dbReference>
<dbReference type="Pfam" id="PF00155">
    <property type="entry name" value="Aminotran_1_2"/>
    <property type="match status" value="1"/>
</dbReference>
<dbReference type="SUPFAM" id="SSF53383">
    <property type="entry name" value="PLP-dependent transferases"/>
    <property type="match status" value="1"/>
</dbReference>
<dbReference type="PROSITE" id="PS00599">
    <property type="entry name" value="AA_TRANSFER_CLASS_2"/>
    <property type="match status" value="1"/>
</dbReference>
<accession>Q6LT75</accession>
<organism>
    <name type="scientific">Photobacterium profundum (strain SS9)</name>
    <dbReference type="NCBI Taxonomy" id="298386"/>
    <lineage>
        <taxon>Bacteria</taxon>
        <taxon>Pseudomonadati</taxon>
        <taxon>Pseudomonadota</taxon>
        <taxon>Gammaproteobacteria</taxon>
        <taxon>Vibrionales</taxon>
        <taxon>Vibrionaceae</taxon>
        <taxon>Photobacterium</taxon>
    </lineage>
</organism>
<protein>
    <recommendedName>
        <fullName evidence="1">Histidinol-phosphate aminotransferase</fullName>
        <ecNumber evidence="1">2.6.1.9</ecNumber>
    </recommendedName>
    <alternativeName>
        <fullName evidence="1">Imidazole acetol-phosphate transaminase</fullName>
    </alternativeName>
</protein>
<reference key="1">
    <citation type="journal article" date="2005" name="Science">
        <title>Life at depth: Photobacterium profundum genome sequence and expression analysis.</title>
        <authorList>
            <person name="Vezzi A."/>
            <person name="Campanaro S."/>
            <person name="D'Angelo M."/>
            <person name="Simonato F."/>
            <person name="Vitulo N."/>
            <person name="Lauro F.M."/>
            <person name="Cestaro A."/>
            <person name="Malacrida G."/>
            <person name="Simionati B."/>
            <person name="Cannata N."/>
            <person name="Romualdi C."/>
            <person name="Bartlett D.H."/>
            <person name="Valle G."/>
        </authorList>
    </citation>
    <scope>NUCLEOTIDE SEQUENCE [LARGE SCALE GENOMIC DNA]</scope>
    <source>
        <strain>ATCC BAA-1253 / SS9</strain>
    </source>
</reference>
<sequence length="374" mass="41089">MSIEQLARKTVRELTPYQSARRLGGSGDIWLNANESPFANEYSVTCGRLNRYSECQPADLIQAYADYAGIDSKQVLTSRGADEGIELLIRTFCEPNQDSILYCPPTYGMYAISAETFDIKTKTVPLTPEWQLDLPSIQNNLDGVKLVFVCSPNNPTGNVMNRRDIEKLLDMTTDKALVVIDEAYIDFCLETSTVDLLAKYPHLVILRTLSKAFALAGLRCGFTLANTDVINLLLKVIAPYPVPVPVADIAVQALSVAGRARTKFQVLDISANRAYLQAGLGMLSGVTVYDGYGNYLLVKFTHADALFTALWNHGIILRRSPIENCIRISVGNRDECEKTLAFIRAHVTSQGNSSQDSASKSNSSANNDELNASN</sequence>
<proteinExistence type="inferred from homology"/>
<name>HIS8_PHOPR</name>
<feature type="chain" id="PRO_0000153414" description="Histidinol-phosphate aminotransferase">
    <location>
        <begin position="1"/>
        <end position="374"/>
    </location>
</feature>
<feature type="region of interest" description="Disordered" evidence="2">
    <location>
        <begin position="351"/>
        <end position="374"/>
    </location>
</feature>
<feature type="compositionally biased region" description="Low complexity" evidence="2">
    <location>
        <begin position="351"/>
        <end position="368"/>
    </location>
</feature>
<feature type="modified residue" description="N6-(pyridoxal phosphate)lysine" evidence="1">
    <location>
        <position position="211"/>
    </location>
</feature>
<comment type="catalytic activity">
    <reaction evidence="1">
        <text>L-histidinol phosphate + 2-oxoglutarate = 3-(imidazol-4-yl)-2-oxopropyl phosphate + L-glutamate</text>
        <dbReference type="Rhea" id="RHEA:23744"/>
        <dbReference type="ChEBI" id="CHEBI:16810"/>
        <dbReference type="ChEBI" id="CHEBI:29985"/>
        <dbReference type="ChEBI" id="CHEBI:57766"/>
        <dbReference type="ChEBI" id="CHEBI:57980"/>
        <dbReference type="EC" id="2.6.1.9"/>
    </reaction>
</comment>
<comment type="cofactor">
    <cofactor evidence="1">
        <name>pyridoxal 5'-phosphate</name>
        <dbReference type="ChEBI" id="CHEBI:597326"/>
    </cofactor>
</comment>
<comment type="pathway">
    <text evidence="1">Amino-acid biosynthesis; L-histidine biosynthesis; L-histidine from 5-phospho-alpha-D-ribose 1-diphosphate: step 7/9.</text>
</comment>
<comment type="subunit">
    <text evidence="1">Homodimer.</text>
</comment>
<comment type="similarity">
    <text evidence="1">Belongs to the class-II pyridoxal-phosphate-dependent aminotransferase family. Histidinol-phosphate aminotransferase subfamily.</text>
</comment>
<gene>
    <name evidence="1" type="primary">hisC</name>
    <name type="ordered locus">PBPRA1090</name>
</gene>
<keyword id="KW-0028">Amino-acid biosynthesis</keyword>
<keyword id="KW-0032">Aminotransferase</keyword>
<keyword id="KW-0368">Histidine biosynthesis</keyword>
<keyword id="KW-0663">Pyridoxal phosphate</keyword>
<keyword id="KW-1185">Reference proteome</keyword>
<keyword id="KW-0808">Transferase</keyword>